<proteinExistence type="evidence at protein level"/>
<feature type="initiator methionine" description="Removed" evidence="2">
    <location>
        <position position="1"/>
    </location>
</feature>
<feature type="chain" id="PRO_0000199585" description="Profilin-2">
    <location>
        <begin position="2"/>
        <end position="126"/>
    </location>
</feature>
<feature type="site" description="Actin binding">
    <location>
        <position position="116"/>
    </location>
</feature>
<feature type="modified residue" description="Blocked amino end (Ser)">
    <location>
        <position position="2"/>
    </location>
</feature>
<feature type="modified residue" description="N6,N6,N6-trimethyllysine" evidence="1 2">
    <location>
        <position position="104"/>
    </location>
</feature>
<feature type="sequence conflict" description="In Ref. 2; AA sequence." evidence="3" ref="2">
    <original>S</original>
    <variation>T</variation>
    <location>
        <position position="2"/>
    </location>
</feature>
<feature type="sequence conflict" description="In Ref. 2; AA sequence." evidence="3" ref="2">
    <original>T</original>
    <variation>S</variation>
    <location>
        <position position="5"/>
    </location>
</feature>
<feature type="helix" evidence="4">
    <location>
        <begin position="3"/>
        <end position="8"/>
    </location>
</feature>
<feature type="turn" evidence="4">
    <location>
        <begin position="9"/>
        <end position="11"/>
    </location>
</feature>
<feature type="helix" evidence="4">
    <location>
        <begin position="12"/>
        <end position="14"/>
    </location>
</feature>
<feature type="strand" evidence="4">
    <location>
        <begin position="18"/>
        <end position="24"/>
    </location>
</feature>
<feature type="strand" evidence="4">
    <location>
        <begin position="29"/>
        <end position="32"/>
    </location>
</feature>
<feature type="helix" evidence="4">
    <location>
        <begin position="40"/>
        <end position="51"/>
    </location>
</feature>
<feature type="helix" evidence="4">
    <location>
        <begin position="54"/>
        <end position="59"/>
    </location>
</feature>
<feature type="strand" evidence="4">
    <location>
        <begin position="61"/>
        <end position="63"/>
    </location>
</feature>
<feature type="strand" evidence="4">
    <location>
        <begin position="66"/>
        <end position="82"/>
    </location>
</feature>
<feature type="strand" evidence="4">
    <location>
        <begin position="85"/>
        <end position="91"/>
    </location>
</feature>
<feature type="strand" evidence="4">
    <location>
        <begin position="93"/>
        <end position="101"/>
    </location>
</feature>
<feature type="helix" evidence="4">
    <location>
        <begin position="107"/>
        <end position="122"/>
    </location>
</feature>
<feature type="turn" evidence="4">
    <location>
        <begin position="123"/>
        <end position="125"/>
    </location>
</feature>
<comment type="function">
    <text>Binds to actin and affects the structure of the cytoskeleton. At high concentrations, profilin prevents the polymerization of actin, whereas it enhances it at low concentrations. By binding to PIP2, it inhibits the formation of IP3 and DG.</text>
</comment>
<comment type="subunit">
    <text>Occurs in many kinds of cells as a complex with monomeric actin in a 1:1 ratio.</text>
</comment>
<comment type="subcellular location">
    <subcellularLocation>
        <location>Cytoplasm</location>
        <location>Cytoskeleton</location>
    </subcellularLocation>
</comment>
<comment type="similarity">
    <text evidence="3">Belongs to the profilin family.</text>
</comment>
<organism>
    <name type="scientific">Acanthamoeba castellanii</name>
    <name type="common">Amoeba</name>
    <dbReference type="NCBI Taxonomy" id="5755"/>
    <lineage>
        <taxon>Eukaryota</taxon>
        <taxon>Amoebozoa</taxon>
        <taxon>Discosea</taxon>
        <taxon>Longamoebia</taxon>
        <taxon>Centramoebida</taxon>
        <taxon>Acanthamoebidae</taxon>
        <taxon>Acanthamoeba</taxon>
    </lineage>
</organism>
<reference key="1">
    <citation type="journal article" date="1991" name="Cell Motil. Cytoskeleton">
        <title>Analysis of cDNA clones for Acanthamoeba profilin-I and profilin-II shows end to end homology with vertebrate profilins and a small family of profilin genes.</title>
        <authorList>
            <person name="Pollard T.D."/>
            <person name="Rimm D.L."/>
        </authorList>
    </citation>
    <scope>NUCLEOTIDE SEQUENCE [MRNA]</scope>
    <scope>METHYLATION AT LYS-104</scope>
</reference>
<reference key="2">
    <citation type="journal article" date="1988" name="Eur. J. Biochem.">
        <title>The primary structure of the basic isoform of Acanthamoeba profilin.</title>
        <authorList>
            <person name="Ampe C."/>
            <person name="Sato M."/>
            <person name="Pollard T.D."/>
            <person name="Vandekerckhove J."/>
        </authorList>
    </citation>
    <scope>PROTEIN SEQUENCE OF 2-126</scope>
    <scope>METHYLATION AT LYS-104</scope>
</reference>
<reference key="3">
    <citation type="journal article" date="1989" name="J. Cell Biol.">
        <title>Acanthamoeba actin and profilin can be cross-linked between glutamic acid 364 of actin and lysine 115 of profilin.</title>
        <authorList>
            <person name="Vandekerckhove J."/>
            <person name="Kaiser D.A."/>
            <person name="Pollard T.D."/>
        </authorList>
    </citation>
    <scope>CROSS-LINKING TO ACTIN</scope>
</reference>
<reference key="4">
    <citation type="journal article" date="1994" name="Proc. Natl. Acad. Sci. U.S.A.">
        <title>X-ray structures of isoforms of the actin-binding protein profilin that differ in their affinity for phosphatidylinositol phosphates.</title>
        <authorList>
            <person name="Fedorov A.A."/>
            <person name="Magnus K.A."/>
            <person name="Graupe M.H."/>
            <person name="Lattman E.E."/>
            <person name="Pollard T.D."/>
            <person name="Almo S.C."/>
        </authorList>
    </citation>
    <scope>X-RAY CRYSTALLOGRAPHY (2.8 ANGSTROMS)</scope>
</reference>
<protein>
    <recommendedName>
        <fullName>Profilin-2</fullName>
    </recommendedName>
    <alternativeName>
        <fullName>Basic profilin</fullName>
    </alternativeName>
    <alternativeName>
        <fullName>Profilin II</fullName>
    </alternativeName>
</protein>
<name>PROF2_ACACA</name>
<sequence>MSWQTYVDTNLVGTGAVTQAAIIGHDGNTWATSAGFAVSPANGAALANAFKDATAIRSNGFELAGTRYVTIRADDRSVYGKKGSAGVITVKTSKAILIGVYNEKIQPGTAANVVEKLADYLIGQGF</sequence>
<dbReference type="EMBL" id="L27486">
    <property type="protein sequence ID" value="AAA27711.1"/>
    <property type="molecule type" value="mRNA"/>
</dbReference>
<dbReference type="PIR" id="A48405">
    <property type="entry name" value="FAAX2"/>
</dbReference>
<dbReference type="PDB" id="1F2K">
    <property type="method" value="X-ray"/>
    <property type="resolution" value="2.30 A"/>
    <property type="chains" value="A/B=2-126"/>
</dbReference>
<dbReference type="PDB" id="2ACG">
    <property type="method" value="X-ray"/>
    <property type="resolution" value="2.50 A"/>
    <property type="chains" value="A=2-126"/>
</dbReference>
<dbReference type="PDBsum" id="1F2K"/>
<dbReference type="PDBsum" id="2ACG"/>
<dbReference type="SMR" id="P19984"/>
<dbReference type="VEuPathDB" id="AmoebaDB:ACA1_066130"/>
<dbReference type="OMA" id="HHAENVQ"/>
<dbReference type="EvolutionaryTrace" id="P19984"/>
<dbReference type="GO" id="GO:0005938">
    <property type="term" value="C:cell cortex"/>
    <property type="evidence" value="ECO:0007669"/>
    <property type="project" value="TreeGrafter"/>
</dbReference>
<dbReference type="GO" id="GO:0005856">
    <property type="term" value="C:cytoskeleton"/>
    <property type="evidence" value="ECO:0007669"/>
    <property type="project" value="UniProtKB-SubCell"/>
</dbReference>
<dbReference type="GO" id="GO:0003785">
    <property type="term" value="F:actin monomer binding"/>
    <property type="evidence" value="ECO:0007669"/>
    <property type="project" value="TreeGrafter"/>
</dbReference>
<dbReference type="CDD" id="cd00148">
    <property type="entry name" value="PROF"/>
    <property type="match status" value="1"/>
</dbReference>
<dbReference type="FunFam" id="3.30.450.30:FF:000001">
    <property type="entry name" value="Profilin"/>
    <property type="match status" value="1"/>
</dbReference>
<dbReference type="Gene3D" id="3.30.450.30">
    <property type="entry name" value="Dynein light chain 2a, cytoplasmic"/>
    <property type="match status" value="1"/>
</dbReference>
<dbReference type="InterPro" id="IPR048278">
    <property type="entry name" value="PFN"/>
</dbReference>
<dbReference type="InterPro" id="IPR005455">
    <property type="entry name" value="PFN_euk"/>
</dbReference>
<dbReference type="InterPro" id="IPR036140">
    <property type="entry name" value="PFN_sf"/>
</dbReference>
<dbReference type="InterPro" id="IPR027310">
    <property type="entry name" value="Profilin_CS"/>
</dbReference>
<dbReference type="PANTHER" id="PTHR11604">
    <property type="entry name" value="PROFILIN"/>
    <property type="match status" value="1"/>
</dbReference>
<dbReference type="PANTHER" id="PTHR11604:SF0">
    <property type="entry name" value="PROFILIN"/>
    <property type="match status" value="1"/>
</dbReference>
<dbReference type="Pfam" id="PF00235">
    <property type="entry name" value="Profilin"/>
    <property type="match status" value="1"/>
</dbReference>
<dbReference type="PRINTS" id="PR00392">
    <property type="entry name" value="PROFILIN"/>
</dbReference>
<dbReference type="PRINTS" id="PR01640">
    <property type="entry name" value="PROFILINPLNT"/>
</dbReference>
<dbReference type="SMART" id="SM00392">
    <property type="entry name" value="PROF"/>
    <property type="match status" value="1"/>
</dbReference>
<dbReference type="SUPFAM" id="SSF55770">
    <property type="entry name" value="Profilin (actin-binding protein)"/>
    <property type="match status" value="1"/>
</dbReference>
<dbReference type="PROSITE" id="PS00414">
    <property type="entry name" value="PROFILIN"/>
    <property type="match status" value="1"/>
</dbReference>
<accession>P19984</accession>
<evidence type="ECO:0000269" key="1">
    <source>
    </source>
</evidence>
<evidence type="ECO:0000269" key="2">
    <source>
    </source>
</evidence>
<evidence type="ECO:0000305" key="3"/>
<evidence type="ECO:0007829" key="4">
    <source>
        <dbReference type="PDB" id="1F2K"/>
    </source>
</evidence>
<keyword id="KW-0002">3D-structure</keyword>
<keyword id="KW-0009">Actin-binding</keyword>
<keyword id="KW-0963">Cytoplasm</keyword>
<keyword id="KW-0206">Cytoskeleton</keyword>
<keyword id="KW-0903">Direct protein sequencing</keyword>
<keyword id="KW-0488">Methylation</keyword>